<name>RRP8_CAEBR</name>
<feature type="chain" id="PRO_0000390455" description="Ribosomal RNA-processing protein 8">
    <location>
        <begin position="1"/>
        <end position="332"/>
    </location>
</feature>
<feature type="region of interest" description="Disordered" evidence="3">
    <location>
        <begin position="1"/>
        <end position="109"/>
    </location>
</feature>
<feature type="compositionally biased region" description="Basic residues" evidence="3">
    <location>
        <begin position="38"/>
        <end position="53"/>
    </location>
</feature>
<feature type="compositionally biased region" description="Basic residues" evidence="3">
    <location>
        <begin position="82"/>
        <end position="94"/>
    </location>
</feature>
<feature type="compositionally biased region" description="Basic and acidic residues" evidence="3">
    <location>
        <begin position="95"/>
        <end position="109"/>
    </location>
</feature>
<feature type="binding site" evidence="2">
    <location>
        <position position="158"/>
    </location>
    <ligand>
        <name>S-adenosyl-L-methionine</name>
        <dbReference type="ChEBI" id="CHEBI:59789"/>
    </ligand>
</feature>
<feature type="binding site" evidence="2">
    <location>
        <position position="193"/>
    </location>
    <ligand>
        <name>S-adenosyl-L-methionine</name>
        <dbReference type="ChEBI" id="CHEBI:59789"/>
    </ligand>
</feature>
<feature type="binding site" evidence="2">
    <location>
        <position position="213"/>
    </location>
    <ligand>
        <name>S-adenosyl-L-methionine</name>
        <dbReference type="ChEBI" id="CHEBI:59789"/>
    </ligand>
</feature>
<feature type="binding site" evidence="2">
    <location>
        <position position="225"/>
    </location>
    <ligand>
        <name>S-adenosyl-L-methionine</name>
        <dbReference type="ChEBI" id="CHEBI:59789"/>
    </ligand>
</feature>
<feature type="binding site" evidence="2">
    <location>
        <position position="226"/>
    </location>
    <ligand>
        <name>S-adenosyl-L-methionine</name>
        <dbReference type="ChEBI" id="CHEBI:59789"/>
    </ligand>
</feature>
<feature type="binding site" evidence="2">
    <location>
        <position position="242"/>
    </location>
    <ligand>
        <name>S-adenosyl-L-methionine</name>
        <dbReference type="ChEBI" id="CHEBI:59789"/>
    </ligand>
</feature>
<accession>A8XI07</accession>
<evidence type="ECO:0000250" key="1"/>
<evidence type="ECO:0000250" key="2">
    <source>
        <dbReference type="UniProtKB" id="O43159"/>
    </source>
</evidence>
<evidence type="ECO:0000256" key="3">
    <source>
        <dbReference type="SAM" id="MobiDB-lite"/>
    </source>
</evidence>
<evidence type="ECO:0000305" key="4"/>
<dbReference type="EC" id="2.1.1.-"/>
<dbReference type="EMBL" id="HE600980">
    <property type="protein sequence ID" value="CAP32280.1"/>
    <property type="molecule type" value="Genomic_DNA"/>
</dbReference>
<dbReference type="RefSeq" id="XP_002634957.1">
    <property type="nucleotide sequence ID" value="XM_002634911.1"/>
</dbReference>
<dbReference type="SMR" id="A8XI07"/>
<dbReference type="FunCoup" id="A8XI07">
    <property type="interactions" value="1375"/>
</dbReference>
<dbReference type="STRING" id="6238.A8XI07"/>
<dbReference type="EnsemblMetazoa" id="CBG13492.1">
    <property type="protein sequence ID" value="CBG13492.1"/>
    <property type="gene ID" value="WBGene00034250"/>
</dbReference>
<dbReference type="GeneID" id="8576951"/>
<dbReference type="KEGG" id="cbr:CBG_13492"/>
<dbReference type="CTD" id="8576951"/>
<dbReference type="WormBase" id="CBG13492">
    <property type="protein sequence ID" value="CBP03301"/>
    <property type="gene ID" value="WBGene00034250"/>
    <property type="gene designation" value="Cbr-rrp-8"/>
</dbReference>
<dbReference type="eggNOG" id="KOG3045">
    <property type="taxonomic scope" value="Eukaryota"/>
</dbReference>
<dbReference type="HOGENOM" id="CLU_027694_2_1_1"/>
<dbReference type="InParanoid" id="A8XI07"/>
<dbReference type="OMA" id="KWPTNPL"/>
<dbReference type="Proteomes" id="UP000008549">
    <property type="component" value="Unassembled WGS sequence"/>
</dbReference>
<dbReference type="GO" id="GO:0005677">
    <property type="term" value="C:chromatin silencing complex"/>
    <property type="evidence" value="ECO:0000250"/>
    <property type="project" value="UniProtKB"/>
</dbReference>
<dbReference type="GO" id="GO:0005730">
    <property type="term" value="C:nucleolus"/>
    <property type="evidence" value="ECO:0000250"/>
    <property type="project" value="UniProtKB"/>
</dbReference>
<dbReference type="GO" id="GO:0033553">
    <property type="term" value="C:rDNA heterochromatin"/>
    <property type="evidence" value="ECO:0000250"/>
    <property type="project" value="UniProtKB"/>
</dbReference>
<dbReference type="GO" id="GO:0035064">
    <property type="term" value="F:methylated histone binding"/>
    <property type="evidence" value="ECO:0000250"/>
    <property type="project" value="UniProtKB"/>
</dbReference>
<dbReference type="GO" id="GO:0008168">
    <property type="term" value="F:methyltransferase activity"/>
    <property type="evidence" value="ECO:0007669"/>
    <property type="project" value="UniProtKB-KW"/>
</dbReference>
<dbReference type="GO" id="GO:0042149">
    <property type="term" value="P:cellular response to glucose starvation"/>
    <property type="evidence" value="ECO:0000318"/>
    <property type="project" value="GO_Central"/>
</dbReference>
<dbReference type="GO" id="GO:0032259">
    <property type="term" value="P:methylation"/>
    <property type="evidence" value="ECO:0007669"/>
    <property type="project" value="UniProtKB-KW"/>
</dbReference>
<dbReference type="GO" id="GO:0000183">
    <property type="term" value="P:rDNA heterochromatin formation"/>
    <property type="evidence" value="ECO:0000250"/>
    <property type="project" value="UniProtKB"/>
</dbReference>
<dbReference type="GO" id="GO:0046015">
    <property type="term" value="P:regulation of transcription by glucose"/>
    <property type="evidence" value="ECO:0000318"/>
    <property type="project" value="GO_Central"/>
</dbReference>
<dbReference type="GO" id="GO:0006364">
    <property type="term" value="P:rRNA processing"/>
    <property type="evidence" value="ECO:0007669"/>
    <property type="project" value="UniProtKB-KW"/>
</dbReference>
<dbReference type="CDD" id="cd02440">
    <property type="entry name" value="AdoMet_MTases"/>
    <property type="match status" value="1"/>
</dbReference>
<dbReference type="FunFam" id="1.10.10.2150:FF:000001">
    <property type="entry name" value="Ribosomal RNA-processing protein 8"/>
    <property type="match status" value="1"/>
</dbReference>
<dbReference type="FunFam" id="3.40.50.150:FF:000068">
    <property type="entry name" value="Ribosomal RNA-processing protein 8"/>
    <property type="match status" value="1"/>
</dbReference>
<dbReference type="Gene3D" id="1.10.10.2150">
    <property type="entry name" value="Ribosomal RNA-processing protein 8, N-terminal domain"/>
    <property type="match status" value="1"/>
</dbReference>
<dbReference type="Gene3D" id="3.40.50.150">
    <property type="entry name" value="Vaccinia Virus protein VP39"/>
    <property type="match status" value="1"/>
</dbReference>
<dbReference type="InterPro" id="IPR007823">
    <property type="entry name" value="RRP8"/>
</dbReference>
<dbReference type="InterPro" id="IPR042036">
    <property type="entry name" value="RRP8_N"/>
</dbReference>
<dbReference type="InterPro" id="IPR029063">
    <property type="entry name" value="SAM-dependent_MTases_sf"/>
</dbReference>
<dbReference type="PANTHER" id="PTHR12787">
    <property type="entry name" value="RIBOSOMAL RNA-PROCESSING PROTEIN 8"/>
    <property type="match status" value="1"/>
</dbReference>
<dbReference type="PANTHER" id="PTHR12787:SF0">
    <property type="entry name" value="RIBOSOMAL RNA-PROCESSING PROTEIN 8"/>
    <property type="match status" value="1"/>
</dbReference>
<dbReference type="Pfam" id="PF05148">
    <property type="entry name" value="Methyltransf_8"/>
    <property type="match status" value="1"/>
</dbReference>
<dbReference type="SUPFAM" id="SSF53335">
    <property type="entry name" value="S-adenosyl-L-methionine-dependent methyltransferases"/>
    <property type="match status" value="1"/>
</dbReference>
<keyword id="KW-0156">Chromatin regulator</keyword>
<keyword id="KW-0489">Methyltransferase</keyword>
<keyword id="KW-0539">Nucleus</keyword>
<keyword id="KW-1185">Reference proteome</keyword>
<keyword id="KW-0678">Repressor</keyword>
<keyword id="KW-0698">rRNA processing</keyword>
<keyword id="KW-0949">S-adenosyl-L-methionine</keyword>
<keyword id="KW-0804">Transcription</keyword>
<keyword id="KW-0805">Transcription regulation</keyword>
<keyword id="KW-0808">Transferase</keyword>
<gene>
    <name type="primary">rrp-8</name>
    <name type="ORF">CBG13492</name>
</gene>
<protein>
    <recommendedName>
        <fullName>Ribosomal RNA-processing protein 8</fullName>
        <ecNumber>2.1.1.-</ecNumber>
    </recommendedName>
</protein>
<organism>
    <name type="scientific">Caenorhabditis briggsae</name>
    <dbReference type="NCBI Taxonomy" id="6238"/>
    <lineage>
        <taxon>Eukaryota</taxon>
        <taxon>Metazoa</taxon>
        <taxon>Ecdysozoa</taxon>
        <taxon>Nematoda</taxon>
        <taxon>Chromadorea</taxon>
        <taxon>Rhabditida</taxon>
        <taxon>Rhabditina</taxon>
        <taxon>Rhabditomorpha</taxon>
        <taxon>Rhabditoidea</taxon>
        <taxon>Rhabditidae</taxon>
        <taxon>Peloderinae</taxon>
        <taxon>Caenorhabditis</taxon>
    </lineage>
</organism>
<reference key="1">
    <citation type="journal article" date="2003" name="PLoS Biol.">
        <title>The genome sequence of Caenorhabditis briggsae: a platform for comparative genomics.</title>
        <authorList>
            <person name="Stein L.D."/>
            <person name="Bao Z."/>
            <person name="Blasiar D."/>
            <person name="Blumenthal T."/>
            <person name="Brent M.R."/>
            <person name="Chen N."/>
            <person name="Chinwalla A."/>
            <person name="Clarke L."/>
            <person name="Clee C."/>
            <person name="Coghlan A."/>
            <person name="Coulson A."/>
            <person name="D'Eustachio P."/>
            <person name="Fitch D.H.A."/>
            <person name="Fulton L.A."/>
            <person name="Fulton R.E."/>
            <person name="Griffiths-Jones S."/>
            <person name="Harris T.W."/>
            <person name="Hillier L.W."/>
            <person name="Kamath R."/>
            <person name="Kuwabara P.E."/>
            <person name="Mardis E.R."/>
            <person name="Marra M.A."/>
            <person name="Miner T.L."/>
            <person name="Minx P."/>
            <person name="Mullikin J.C."/>
            <person name="Plumb R.W."/>
            <person name="Rogers J."/>
            <person name="Schein J.E."/>
            <person name="Sohrmann M."/>
            <person name="Spieth J."/>
            <person name="Stajich J.E."/>
            <person name="Wei C."/>
            <person name="Willey D."/>
            <person name="Wilson R.K."/>
            <person name="Durbin R.M."/>
            <person name="Waterston R.H."/>
        </authorList>
    </citation>
    <scope>NUCLEOTIDE SEQUENCE [LARGE SCALE GENOMIC DNA]</scope>
    <source>
        <strain>AF16</strain>
    </source>
</reference>
<sequence length="332" mass="38143">MGKKRINEVSTTEGAPAEKKKKVEKWLNTSSEDGEGTKKKKRPWRNKVRKLAAKKAAAERRVENSEESTILEPVATAEEATKKKKKRGPKKKKYKPEAAEVEKKNEEGDTVKENPIAEAKKRLDAGRFRMLNEKLYTCTGSEAFDFFKEDRTAFDLYHRGFADQVKKWPNHPLREIIRWLQAKPDKQAVFDLGCGEAKIAEAVGEKHTIRSFDLVAVNDRVESCDMSKLPAEDGSADVVIFCLSLMGTNLYDFIKEARRVLRTGGVLKIGEVTSRFVSIKQFCEAINKMGFETTNRRQLTDYFMMFDFRKIDKVEQKRPYGLKLKPCLYKKR</sequence>
<comment type="function">
    <text evidence="1">Probable methyltransferase required to silence rDNA.</text>
</comment>
<comment type="subcellular location">
    <subcellularLocation>
        <location evidence="1">Nucleus</location>
        <location evidence="1">Nucleolus</location>
    </subcellularLocation>
</comment>
<comment type="similarity">
    <text evidence="4">Belongs to the methyltransferase superfamily. RRP8 family.</text>
</comment>
<proteinExistence type="inferred from homology"/>